<gene>
    <name type="primary">grdE</name>
</gene>
<evidence type="ECO:0000250" key="1"/>
<evidence type="ECO:0000305" key="2"/>
<proteinExistence type="evidence at protein level"/>
<keyword id="KW-0903">Direct protein sequencing</keyword>
<keyword id="KW-0560">Oxidoreductase</keyword>
<keyword id="KW-0670">Pyruvate</keyword>
<keyword id="KW-0704">Schiff base</keyword>
<protein>
    <recommendedName>
        <fullName>Glycine reductase complex component B subunits alpha and beta</fullName>
        <ecNumber>1.21.4.2</ecNumber>
    </recommendedName>
    <alternativeName>
        <fullName>Selenoprotein PB alpha/beta</fullName>
    </alternativeName>
    <component>
        <recommendedName>
            <fullName>Betaine reductase component B subunit beta</fullName>
        </recommendedName>
    </component>
    <component>
        <recommendedName>
            <fullName>Betaine reductase component B subunit alpha</fullName>
        </recommendedName>
    </component>
</protein>
<feature type="chain" id="PRO_0000021372" description="Betaine reductase component B subunit beta">
    <location>
        <begin position="1"/>
        <end position="241"/>
    </location>
</feature>
<feature type="chain" id="PRO_0000021373" description="Betaine reductase component B subunit alpha">
    <location>
        <begin position="242"/>
        <end position="428"/>
    </location>
</feature>
<feature type="active site" description="Schiff-base intermediate with substrate; via pyruvic acid">
    <location>
        <position position="242"/>
    </location>
</feature>
<feature type="modified residue" description="Pyruvic acid (Cys)" evidence="2">
    <location>
        <position position="242"/>
    </location>
</feature>
<dbReference type="EC" id="1.21.4.2"/>
<dbReference type="EMBL" id="Y14275">
    <property type="protein sequence ID" value="CAA74649.1"/>
    <property type="molecule type" value="Genomic_DNA"/>
</dbReference>
<dbReference type="PIR" id="S63507">
    <property type="entry name" value="S63507"/>
</dbReference>
<dbReference type="KEGG" id="ag:CAA74649"/>
<dbReference type="BioCyc" id="MetaCyc:MONOMER-20606"/>
<dbReference type="BRENDA" id="1.21.4.2">
    <property type="organism ID" value="2180"/>
</dbReference>
<dbReference type="GO" id="GO:0030699">
    <property type="term" value="F:glycine reductase activity"/>
    <property type="evidence" value="ECO:0007669"/>
    <property type="project" value="UniProtKB-EC"/>
</dbReference>
<dbReference type="InterPro" id="IPR016585">
    <property type="entry name" value="Gly/sarc/bet_Rdtase_B_asu/bsu"/>
</dbReference>
<dbReference type="InterPro" id="IPR015417">
    <property type="entry name" value="Gly_reductase_pB_sua/b"/>
</dbReference>
<dbReference type="Pfam" id="PF09338">
    <property type="entry name" value="Gly_reductase"/>
    <property type="match status" value="1"/>
</dbReference>
<dbReference type="PIRSF" id="PIRSF011588">
    <property type="entry name" value="Gly_sarc_betain_red_a/b"/>
    <property type="match status" value="1"/>
</dbReference>
<name>GRDE_PEPAC</name>
<organism>
    <name type="scientific">Peptoclostridium acidaminophilum</name>
    <name type="common">Eubacterium acidaminophilum</name>
    <dbReference type="NCBI Taxonomy" id="1731"/>
    <lineage>
        <taxon>Bacteria</taxon>
        <taxon>Bacillati</taxon>
        <taxon>Bacillota</taxon>
        <taxon>Clostridia</taxon>
        <taxon>Peptostreptococcales</taxon>
        <taxon>Peptoclostridiaceae</taxon>
        <taxon>Peptoclostridium</taxon>
    </lineage>
</organism>
<reference key="1">
    <citation type="journal article" date="1999" name="Eur. J. Biochem.">
        <title>Substrate-specific selenoprotein B of glycine reductase from Eubacterium acidaminophilum. Biochemical and molecular analysis.</title>
        <authorList>
            <person name="Wagner M."/>
            <person name="Sonntag D."/>
            <person name="Grimm R."/>
            <person name="Pich A."/>
            <person name="Eckerskorn C."/>
            <person name="Soehling B."/>
            <person name="Andreesen J.R."/>
        </authorList>
    </citation>
    <scope>NUCLEOTIDE SEQUENCE [GENOMIC DNA]</scope>
    <scope>PROTEIN SEQUENCE OF 1-33; 85-98; 107-128; 178-190; 243-262 AND 288-297</scope>
    <source>
        <strain>ATCC 49065 / DSM 3953 / al-2</strain>
    </source>
</reference>
<reference key="2">
    <citation type="journal article" date="1995" name="Eur. J. Biochem.">
        <title>Purification and characterization of protein PB of betaine reductase and its relationship to the corresponding proteins glycine reductase and sarcosine reductase from Eubacterium acidaminophilum.</title>
        <authorList>
            <person name="Meyer M."/>
            <person name="Granderath K."/>
            <person name="Andreesen J.R."/>
        </authorList>
    </citation>
    <scope>PROTEIN SEQUENCE OF 1-33</scope>
    <scope>CHARACTERIZATION</scope>
    <source>
        <strain>ATCC 49065 / DSM 3953 / al-2</strain>
    </source>
</reference>
<comment type="function">
    <text>In the first step of glycine reductase, the substrate is bound to component PB via a Schiff base intermediate. Then the PB-activated substrate is nucleophilically attacked by the selenol anion of component PA to transform it to a carboxymethylated selenoether and the respective amine. By action of component PC, acetyl phosphate is formed, leaving component PA in its oxidized state. Finally component PA becomes reduced by the thioredoxin system to start a new catalytic cycle of reductive deamination.</text>
</comment>
<comment type="catalytic activity">
    <reaction>
        <text>acetyl phosphate + [thioredoxin]-disulfide + NH4(+) + H2O = [thioredoxin]-dithiol + glycine + phosphate + H(+)</text>
        <dbReference type="Rhea" id="RHEA:12232"/>
        <dbReference type="Rhea" id="RHEA-COMP:10698"/>
        <dbReference type="Rhea" id="RHEA-COMP:10700"/>
        <dbReference type="ChEBI" id="CHEBI:15377"/>
        <dbReference type="ChEBI" id="CHEBI:15378"/>
        <dbReference type="ChEBI" id="CHEBI:22191"/>
        <dbReference type="ChEBI" id="CHEBI:28938"/>
        <dbReference type="ChEBI" id="CHEBI:29950"/>
        <dbReference type="ChEBI" id="CHEBI:43474"/>
        <dbReference type="ChEBI" id="CHEBI:50058"/>
        <dbReference type="ChEBI" id="CHEBI:57305"/>
        <dbReference type="EC" id="1.21.4.2"/>
    </reaction>
</comment>
<comment type="subunit">
    <text>Heterohexamer of two alpha, two beta and two gamma subunits. Component of the glycine reductase complex, together with components A and C. PB is substrate specific.</text>
</comment>
<comment type="PTM">
    <text evidence="1">The peptide chain is cleaved into beta and alpha chains, and the alpha chain N-terminal cysteine is deaminated and oxidized to form a reactive pyruvoyl group.</text>
</comment>
<accession>Q9R4G7</accession>
<accession>O32517</accession>
<sequence length="428" mass="46263">MRLEIGNIFIKDIQFGEQTKVENGVLYVNKDEMIKKLSVIEHIKSVDLDIARPGESVRITPVKDVIEPRVKVEGPGGIFPGVISKVETDGSGRTHVLKGAAVVTTGKVVGFQEGIVDMSGVGAEYTPFSKTLNLVVIAEPEDGIEQHRHEEVLRMVGLNAGVYIGEAGRSVTPDEVKVYETDTIFEGAAKYPNLPKVGYVYMLQTQGLLHDTYVYGVDAKKIVPTILYPTEVMDGAILSGNCVSSCDKNPTYVHCNNPMVEELYAMHGKEINFVGVIITNENVYLADKERSSDWTAKLCKFLGLDGAIVSQEGFGNPDTDLIMNCKKIEMEGVKTVISTDEYAGRDGASQSLADADVRANAVVSNGNANMVIVLPPMDKTIGHIQYIDTIAGGFDGSLRADGSIEVEIQAITGATNELGFGYLSAKGY</sequence>